<proteinExistence type="inferred from homology"/>
<keyword id="KW-1185">Reference proteome</keyword>
<keyword id="KW-0687">Ribonucleoprotein</keyword>
<keyword id="KW-0689">Ribosomal protein</keyword>
<keyword id="KW-0694">RNA-binding</keyword>
<keyword id="KW-0699">rRNA-binding</keyword>
<feature type="chain" id="PRO_1000014544" description="Small ribosomal subunit protein bS20">
    <location>
        <begin position="1"/>
        <end position="90"/>
    </location>
</feature>
<feature type="region of interest" description="Disordered" evidence="2">
    <location>
        <begin position="1"/>
        <end position="29"/>
    </location>
</feature>
<reference key="1">
    <citation type="journal article" date="2015" name="Genome Announc.">
        <title>Complete genome sequence of Anaeromyxobacter sp. Fw109-5, an anaerobic, metal-reducing bacterium isolated from a contaminated subsurface environment.</title>
        <authorList>
            <person name="Hwang C."/>
            <person name="Copeland A."/>
            <person name="Lucas S."/>
            <person name="Lapidus A."/>
            <person name="Barry K."/>
            <person name="Glavina Del Rio T."/>
            <person name="Dalin E."/>
            <person name="Tice H."/>
            <person name="Pitluck S."/>
            <person name="Sims D."/>
            <person name="Brettin T."/>
            <person name="Bruce D.C."/>
            <person name="Detter J.C."/>
            <person name="Han C.S."/>
            <person name="Schmutz J."/>
            <person name="Larimer F.W."/>
            <person name="Land M.L."/>
            <person name="Hauser L.J."/>
            <person name="Kyrpides N."/>
            <person name="Lykidis A."/>
            <person name="Richardson P."/>
            <person name="Belieav A."/>
            <person name="Sanford R.A."/>
            <person name="Loeffler F.E."/>
            <person name="Fields M.W."/>
        </authorList>
    </citation>
    <scope>NUCLEOTIDE SEQUENCE [LARGE SCALE GENOMIC DNA]</scope>
    <source>
        <strain>Fw109-5</strain>
    </source>
</reference>
<evidence type="ECO:0000255" key="1">
    <source>
        <dbReference type="HAMAP-Rule" id="MF_00500"/>
    </source>
</evidence>
<evidence type="ECO:0000256" key="2">
    <source>
        <dbReference type="SAM" id="MobiDB-lite"/>
    </source>
</evidence>
<evidence type="ECO:0000305" key="3"/>
<accession>A7HDX2</accession>
<name>RS20_ANADF</name>
<gene>
    <name evidence="1" type="primary">rpsT</name>
    <name type="ordered locus">Anae109_2717</name>
</gene>
<protein>
    <recommendedName>
        <fullName evidence="1">Small ribosomal subunit protein bS20</fullName>
    </recommendedName>
    <alternativeName>
        <fullName evidence="3">30S ribosomal protein S20</fullName>
    </alternativeName>
</protein>
<organism>
    <name type="scientific">Anaeromyxobacter sp. (strain Fw109-5)</name>
    <dbReference type="NCBI Taxonomy" id="404589"/>
    <lineage>
        <taxon>Bacteria</taxon>
        <taxon>Pseudomonadati</taxon>
        <taxon>Myxococcota</taxon>
        <taxon>Myxococcia</taxon>
        <taxon>Myxococcales</taxon>
        <taxon>Cystobacterineae</taxon>
        <taxon>Anaeromyxobacteraceae</taxon>
        <taxon>Anaeromyxobacter</taxon>
    </lineage>
</organism>
<dbReference type="EMBL" id="CP000769">
    <property type="protein sequence ID" value="ABS26918.1"/>
    <property type="molecule type" value="Genomic_DNA"/>
</dbReference>
<dbReference type="RefSeq" id="WP_012097519.1">
    <property type="nucleotide sequence ID" value="NC_009675.1"/>
</dbReference>
<dbReference type="SMR" id="A7HDX2"/>
<dbReference type="STRING" id="404589.Anae109_2717"/>
<dbReference type="KEGG" id="afw:Anae109_2717"/>
<dbReference type="eggNOG" id="COG0268">
    <property type="taxonomic scope" value="Bacteria"/>
</dbReference>
<dbReference type="HOGENOM" id="CLU_160655_3_1_7"/>
<dbReference type="Proteomes" id="UP000006382">
    <property type="component" value="Chromosome"/>
</dbReference>
<dbReference type="GO" id="GO:0005829">
    <property type="term" value="C:cytosol"/>
    <property type="evidence" value="ECO:0007669"/>
    <property type="project" value="TreeGrafter"/>
</dbReference>
<dbReference type="GO" id="GO:0015935">
    <property type="term" value="C:small ribosomal subunit"/>
    <property type="evidence" value="ECO:0007669"/>
    <property type="project" value="TreeGrafter"/>
</dbReference>
<dbReference type="GO" id="GO:0070181">
    <property type="term" value="F:small ribosomal subunit rRNA binding"/>
    <property type="evidence" value="ECO:0007669"/>
    <property type="project" value="TreeGrafter"/>
</dbReference>
<dbReference type="GO" id="GO:0003735">
    <property type="term" value="F:structural constituent of ribosome"/>
    <property type="evidence" value="ECO:0007669"/>
    <property type="project" value="InterPro"/>
</dbReference>
<dbReference type="GO" id="GO:0006412">
    <property type="term" value="P:translation"/>
    <property type="evidence" value="ECO:0007669"/>
    <property type="project" value="UniProtKB-UniRule"/>
</dbReference>
<dbReference type="FunFam" id="1.20.58.110:FF:000001">
    <property type="entry name" value="30S ribosomal protein S20"/>
    <property type="match status" value="1"/>
</dbReference>
<dbReference type="Gene3D" id="1.20.58.110">
    <property type="entry name" value="Ribosomal protein S20"/>
    <property type="match status" value="1"/>
</dbReference>
<dbReference type="HAMAP" id="MF_00500">
    <property type="entry name" value="Ribosomal_bS20"/>
    <property type="match status" value="1"/>
</dbReference>
<dbReference type="InterPro" id="IPR002583">
    <property type="entry name" value="Ribosomal_bS20"/>
</dbReference>
<dbReference type="InterPro" id="IPR036510">
    <property type="entry name" value="Ribosomal_bS20_sf"/>
</dbReference>
<dbReference type="NCBIfam" id="TIGR00029">
    <property type="entry name" value="S20"/>
    <property type="match status" value="1"/>
</dbReference>
<dbReference type="PANTHER" id="PTHR33398">
    <property type="entry name" value="30S RIBOSOMAL PROTEIN S20"/>
    <property type="match status" value="1"/>
</dbReference>
<dbReference type="PANTHER" id="PTHR33398:SF1">
    <property type="entry name" value="SMALL RIBOSOMAL SUBUNIT PROTEIN BS20C"/>
    <property type="match status" value="1"/>
</dbReference>
<dbReference type="Pfam" id="PF01649">
    <property type="entry name" value="Ribosomal_S20p"/>
    <property type="match status" value="1"/>
</dbReference>
<dbReference type="SUPFAM" id="SSF46992">
    <property type="entry name" value="Ribosomal protein S20"/>
    <property type="match status" value="1"/>
</dbReference>
<comment type="function">
    <text evidence="1">Binds directly to 16S ribosomal RNA.</text>
</comment>
<comment type="similarity">
    <text evidence="1">Belongs to the bacterial ribosomal protein bS20 family.</text>
</comment>
<sequence length="90" mass="9496">MANTASAEKRNRQAQKRRARNVQVRTGVKSAVKKAREAITQGDGNAARDAFKAAARALEKASSKGVVHKNAASRKISRLAKAAAKVAAAK</sequence>